<feature type="chain" id="PRO_1000132542" description="Imidazole glycerol phosphate synthase subunit HisH">
    <location>
        <begin position="1"/>
        <end position="218"/>
    </location>
</feature>
<feature type="domain" description="Glutamine amidotransferase type-1" evidence="1">
    <location>
        <begin position="7"/>
        <end position="211"/>
    </location>
</feature>
<feature type="active site" description="Nucleophile" evidence="1">
    <location>
        <position position="82"/>
    </location>
</feature>
<feature type="active site" evidence="1">
    <location>
        <position position="186"/>
    </location>
</feature>
<feature type="active site" evidence="1">
    <location>
        <position position="188"/>
    </location>
</feature>
<organism>
    <name type="scientific">Shewanella sediminis (strain HAW-EB3)</name>
    <dbReference type="NCBI Taxonomy" id="425104"/>
    <lineage>
        <taxon>Bacteria</taxon>
        <taxon>Pseudomonadati</taxon>
        <taxon>Pseudomonadota</taxon>
        <taxon>Gammaproteobacteria</taxon>
        <taxon>Alteromonadales</taxon>
        <taxon>Shewanellaceae</taxon>
        <taxon>Shewanella</taxon>
    </lineage>
</organism>
<protein>
    <recommendedName>
        <fullName evidence="1">Imidazole glycerol phosphate synthase subunit HisH</fullName>
        <ecNumber evidence="1">4.3.2.10</ecNumber>
    </recommendedName>
    <alternativeName>
        <fullName evidence="1">IGP synthase glutaminase subunit</fullName>
        <ecNumber evidence="1">3.5.1.2</ecNumber>
    </alternativeName>
    <alternativeName>
        <fullName evidence="1">IGP synthase subunit HisH</fullName>
    </alternativeName>
    <alternativeName>
        <fullName evidence="1">ImGP synthase subunit HisH</fullName>
        <shortName evidence="1">IGPS subunit HisH</shortName>
    </alternativeName>
</protein>
<sequence length="218" mass="23266">MNQADNSTVIIDTGCANLSSVRYAFERICSDVIVSDNHDLIKAATRVVLPGVGTAGAAMASLKDKSLVGLIQGLTQPVLGVCLGMQMMTQVSKEHGGRDIDCECLGLIPTDVEELNSQGQPLPHMGWNQISPSMHPLFAGIPAGSYLYFVHSYRVPLSDYTIASCEYGETFSAAIAKDNFMGVQFHPEKSAAIGSKILSNFLALDKASLDAALQEPKS</sequence>
<gene>
    <name evidence="1" type="primary">hisH</name>
    <name type="ordered locus">Ssed_2545</name>
</gene>
<evidence type="ECO:0000255" key="1">
    <source>
        <dbReference type="HAMAP-Rule" id="MF_00278"/>
    </source>
</evidence>
<name>HIS5_SHESH</name>
<keyword id="KW-0028">Amino-acid biosynthesis</keyword>
<keyword id="KW-0963">Cytoplasm</keyword>
<keyword id="KW-0315">Glutamine amidotransferase</keyword>
<keyword id="KW-0368">Histidine biosynthesis</keyword>
<keyword id="KW-0378">Hydrolase</keyword>
<keyword id="KW-0456">Lyase</keyword>
<keyword id="KW-1185">Reference proteome</keyword>
<dbReference type="EC" id="4.3.2.10" evidence="1"/>
<dbReference type="EC" id="3.5.1.2" evidence="1"/>
<dbReference type="EMBL" id="CP000821">
    <property type="protein sequence ID" value="ABV37152.1"/>
    <property type="molecule type" value="Genomic_DNA"/>
</dbReference>
<dbReference type="RefSeq" id="WP_012142885.1">
    <property type="nucleotide sequence ID" value="NC_009831.1"/>
</dbReference>
<dbReference type="SMR" id="A8FWC9"/>
<dbReference type="STRING" id="425104.Ssed_2545"/>
<dbReference type="KEGG" id="sse:Ssed_2545"/>
<dbReference type="eggNOG" id="COG0118">
    <property type="taxonomic scope" value="Bacteria"/>
</dbReference>
<dbReference type="HOGENOM" id="CLU_071837_0_0_6"/>
<dbReference type="OrthoDB" id="9807137at2"/>
<dbReference type="UniPathway" id="UPA00031">
    <property type="reaction ID" value="UER00010"/>
</dbReference>
<dbReference type="Proteomes" id="UP000002015">
    <property type="component" value="Chromosome"/>
</dbReference>
<dbReference type="GO" id="GO:0005737">
    <property type="term" value="C:cytoplasm"/>
    <property type="evidence" value="ECO:0007669"/>
    <property type="project" value="UniProtKB-SubCell"/>
</dbReference>
<dbReference type="GO" id="GO:0004359">
    <property type="term" value="F:glutaminase activity"/>
    <property type="evidence" value="ECO:0007669"/>
    <property type="project" value="UniProtKB-EC"/>
</dbReference>
<dbReference type="GO" id="GO:0000107">
    <property type="term" value="F:imidazoleglycerol-phosphate synthase activity"/>
    <property type="evidence" value="ECO:0007669"/>
    <property type="project" value="UniProtKB-UniRule"/>
</dbReference>
<dbReference type="GO" id="GO:0016829">
    <property type="term" value="F:lyase activity"/>
    <property type="evidence" value="ECO:0007669"/>
    <property type="project" value="UniProtKB-KW"/>
</dbReference>
<dbReference type="GO" id="GO:0000105">
    <property type="term" value="P:L-histidine biosynthetic process"/>
    <property type="evidence" value="ECO:0007669"/>
    <property type="project" value="UniProtKB-UniRule"/>
</dbReference>
<dbReference type="CDD" id="cd01748">
    <property type="entry name" value="GATase1_IGP_Synthase"/>
    <property type="match status" value="1"/>
</dbReference>
<dbReference type="FunFam" id="3.40.50.880:FF:000009">
    <property type="entry name" value="Imidazole glycerol phosphate synthase subunit HisH"/>
    <property type="match status" value="1"/>
</dbReference>
<dbReference type="Gene3D" id="3.40.50.880">
    <property type="match status" value="1"/>
</dbReference>
<dbReference type="HAMAP" id="MF_00278">
    <property type="entry name" value="HisH"/>
    <property type="match status" value="1"/>
</dbReference>
<dbReference type="InterPro" id="IPR029062">
    <property type="entry name" value="Class_I_gatase-like"/>
</dbReference>
<dbReference type="InterPro" id="IPR017926">
    <property type="entry name" value="GATASE"/>
</dbReference>
<dbReference type="InterPro" id="IPR010139">
    <property type="entry name" value="Imidazole-glycPsynth_HisH"/>
</dbReference>
<dbReference type="NCBIfam" id="TIGR01855">
    <property type="entry name" value="IMP_synth_hisH"/>
    <property type="match status" value="1"/>
</dbReference>
<dbReference type="PANTHER" id="PTHR42701">
    <property type="entry name" value="IMIDAZOLE GLYCEROL PHOSPHATE SYNTHASE SUBUNIT HISH"/>
    <property type="match status" value="1"/>
</dbReference>
<dbReference type="PANTHER" id="PTHR42701:SF1">
    <property type="entry name" value="IMIDAZOLE GLYCEROL PHOSPHATE SYNTHASE SUBUNIT HISH"/>
    <property type="match status" value="1"/>
</dbReference>
<dbReference type="Pfam" id="PF00117">
    <property type="entry name" value="GATase"/>
    <property type="match status" value="1"/>
</dbReference>
<dbReference type="PIRSF" id="PIRSF000495">
    <property type="entry name" value="Amidotransf_hisH"/>
    <property type="match status" value="1"/>
</dbReference>
<dbReference type="PRINTS" id="PR00097">
    <property type="entry name" value="ANTSNTHASEII"/>
</dbReference>
<dbReference type="SUPFAM" id="SSF52317">
    <property type="entry name" value="Class I glutamine amidotransferase-like"/>
    <property type="match status" value="1"/>
</dbReference>
<dbReference type="PROSITE" id="PS51273">
    <property type="entry name" value="GATASE_TYPE_1"/>
    <property type="match status" value="1"/>
</dbReference>
<proteinExistence type="inferred from homology"/>
<accession>A8FWC9</accession>
<comment type="function">
    <text evidence="1">IGPS catalyzes the conversion of PRFAR and glutamine to IGP, AICAR and glutamate. The HisH subunit catalyzes the hydrolysis of glutamine to glutamate and ammonia as part of the synthesis of IGP and AICAR. The resulting ammonia molecule is channeled to the active site of HisF.</text>
</comment>
<comment type="catalytic activity">
    <reaction evidence="1">
        <text>5-[(5-phospho-1-deoxy-D-ribulos-1-ylimino)methylamino]-1-(5-phospho-beta-D-ribosyl)imidazole-4-carboxamide + L-glutamine = D-erythro-1-(imidazol-4-yl)glycerol 3-phosphate + 5-amino-1-(5-phospho-beta-D-ribosyl)imidazole-4-carboxamide + L-glutamate + H(+)</text>
        <dbReference type="Rhea" id="RHEA:24793"/>
        <dbReference type="ChEBI" id="CHEBI:15378"/>
        <dbReference type="ChEBI" id="CHEBI:29985"/>
        <dbReference type="ChEBI" id="CHEBI:58278"/>
        <dbReference type="ChEBI" id="CHEBI:58359"/>
        <dbReference type="ChEBI" id="CHEBI:58475"/>
        <dbReference type="ChEBI" id="CHEBI:58525"/>
        <dbReference type="EC" id="4.3.2.10"/>
    </reaction>
</comment>
<comment type="catalytic activity">
    <reaction evidence="1">
        <text>L-glutamine + H2O = L-glutamate + NH4(+)</text>
        <dbReference type="Rhea" id="RHEA:15889"/>
        <dbReference type="ChEBI" id="CHEBI:15377"/>
        <dbReference type="ChEBI" id="CHEBI:28938"/>
        <dbReference type="ChEBI" id="CHEBI:29985"/>
        <dbReference type="ChEBI" id="CHEBI:58359"/>
        <dbReference type="EC" id="3.5.1.2"/>
    </reaction>
</comment>
<comment type="pathway">
    <text evidence="1">Amino-acid biosynthesis; L-histidine biosynthesis; L-histidine from 5-phospho-alpha-D-ribose 1-diphosphate: step 5/9.</text>
</comment>
<comment type="subunit">
    <text evidence="1">Heterodimer of HisH and HisF.</text>
</comment>
<comment type="subcellular location">
    <subcellularLocation>
        <location evidence="1">Cytoplasm</location>
    </subcellularLocation>
</comment>
<reference key="1">
    <citation type="submission" date="2007-08" db="EMBL/GenBank/DDBJ databases">
        <title>Complete sequence of Shewanella sediminis HAW-EB3.</title>
        <authorList>
            <consortium name="US DOE Joint Genome Institute"/>
            <person name="Copeland A."/>
            <person name="Lucas S."/>
            <person name="Lapidus A."/>
            <person name="Barry K."/>
            <person name="Glavina del Rio T."/>
            <person name="Dalin E."/>
            <person name="Tice H."/>
            <person name="Pitluck S."/>
            <person name="Chertkov O."/>
            <person name="Brettin T."/>
            <person name="Bruce D."/>
            <person name="Detter J.C."/>
            <person name="Han C."/>
            <person name="Schmutz J."/>
            <person name="Larimer F."/>
            <person name="Land M."/>
            <person name="Hauser L."/>
            <person name="Kyrpides N."/>
            <person name="Kim E."/>
            <person name="Zhao J.-S."/>
            <person name="Richardson P."/>
        </authorList>
    </citation>
    <scope>NUCLEOTIDE SEQUENCE [LARGE SCALE GENOMIC DNA]</scope>
    <source>
        <strain>HAW-EB3</strain>
    </source>
</reference>